<protein>
    <recommendedName>
        <fullName evidence="1">Ribosome maturation factor RimP</fullName>
    </recommendedName>
</protein>
<accession>A0Q8F5</accession>
<sequence>MLLDDLYEIVEPITADLGYILWGIEVVGSGKLTIRIFIDHENGVSVDDCQIVSKEISAVFDVEDPVSGKYILEVSSPGMNRQIFNIIQAQALVGFNVKAVTLAPVGSQTKFKGVLERVEGNNVILNLEDGKEISFDFDELKKLRVSPDFS</sequence>
<reference key="1">
    <citation type="journal article" date="2007" name="Genome Biol.">
        <title>Comparison of Francisella tularensis genomes reveals evolutionary events associated with the emergence of human pathogenic strains.</title>
        <authorList>
            <person name="Rohmer L."/>
            <person name="Fong C."/>
            <person name="Abmayr S."/>
            <person name="Wasnick M."/>
            <person name="Larson Freeman T.J."/>
            <person name="Radey M."/>
            <person name="Guina T."/>
            <person name="Svensson K."/>
            <person name="Hayden H.S."/>
            <person name="Jacobs M."/>
            <person name="Gallagher L.A."/>
            <person name="Manoil C."/>
            <person name="Ernst R.K."/>
            <person name="Drees B."/>
            <person name="Buckley D."/>
            <person name="Haugen E."/>
            <person name="Bovee D."/>
            <person name="Zhou Y."/>
            <person name="Chang J."/>
            <person name="Levy R."/>
            <person name="Lim R."/>
            <person name="Gillett W."/>
            <person name="Guenthener D."/>
            <person name="Kang A."/>
            <person name="Shaffer S.A."/>
            <person name="Taylor G."/>
            <person name="Chen J."/>
            <person name="Gallis B."/>
            <person name="D'Argenio D.A."/>
            <person name="Forsman M."/>
            <person name="Olson M.V."/>
            <person name="Goodlett D.R."/>
            <person name="Kaul R."/>
            <person name="Miller S.I."/>
            <person name="Brittnacher M.J."/>
        </authorList>
    </citation>
    <scope>NUCLEOTIDE SEQUENCE [LARGE SCALE GENOMIC DNA]</scope>
    <source>
        <strain>U112</strain>
    </source>
</reference>
<comment type="function">
    <text evidence="1">Required for maturation of 30S ribosomal subunits.</text>
</comment>
<comment type="subcellular location">
    <subcellularLocation>
        <location evidence="1">Cytoplasm</location>
    </subcellularLocation>
</comment>
<comment type="similarity">
    <text evidence="1">Belongs to the RimP family.</text>
</comment>
<dbReference type="EMBL" id="CP000439">
    <property type="protein sequence ID" value="ABK90520.1"/>
    <property type="molecule type" value="Genomic_DNA"/>
</dbReference>
<dbReference type="RefSeq" id="WP_003024580.1">
    <property type="nucleotide sequence ID" value="NZ_CP009633.1"/>
</dbReference>
<dbReference type="SMR" id="A0Q8F5"/>
<dbReference type="GeneID" id="75264607"/>
<dbReference type="KEGG" id="ftn:FTN_1662"/>
<dbReference type="KEGG" id="ftx:AW25_326"/>
<dbReference type="Proteomes" id="UP000000762">
    <property type="component" value="Chromosome"/>
</dbReference>
<dbReference type="GO" id="GO:0005829">
    <property type="term" value="C:cytosol"/>
    <property type="evidence" value="ECO:0007669"/>
    <property type="project" value="TreeGrafter"/>
</dbReference>
<dbReference type="GO" id="GO:0000028">
    <property type="term" value="P:ribosomal small subunit assembly"/>
    <property type="evidence" value="ECO:0007669"/>
    <property type="project" value="TreeGrafter"/>
</dbReference>
<dbReference type="GO" id="GO:0006412">
    <property type="term" value="P:translation"/>
    <property type="evidence" value="ECO:0007669"/>
    <property type="project" value="TreeGrafter"/>
</dbReference>
<dbReference type="CDD" id="cd01734">
    <property type="entry name" value="YlxS_C"/>
    <property type="match status" value="1"/>
</dbReference>
<dbReference type="FunFam" id="3.30.300.70:FF:000001">
    <property type="entry name" value="Ribosome maturation factor RimP"/>
    <property type="match status" value="1"/>
</dbReference>
<dbReference type="Gene3D" id="2.30.30.180">
    <property type="entry name" value="Ribosome maturation factor RimP, C-terminal domain"/>
    <property type="match status" value="1"/>
</dbReference>
<dbReference type="Gene3D" id="3.30.300.70">
    <property type="entry name" value="RimP-like superfamily, N-terminal"/>
    <property type="match status" value="1"/>
</dbReference>
<dbReference type="HAMAP" id="MF_01077">
    <property type="entry name" value="RimP"/>
    <property type="match status" value="1"/>
</dbReference>
<dbReference type="InterPro" id="IPR003728">
    <property type="entry name" value="Ribosome_maturation_RimP"/>
</dbReference>
<dbReference type="InterPro" id="IPR028998">
    <property type="entry name" value="RimP_C"/>
</dbReference>
<dbReference type="InterPro" id="IPR036847">
    <property type="entry name" value="RimP_C_sf"/>
</dbReference>
<dbReference type="InterPro" id="IPR028989">
    <property type="entry name" value="RimP_N"/>
</dbReference>
<dbReference type="InterPro" id="IPR035956">
    <property type="entry name" value="RimP_N_sf"/>
</dbReference>
<dbReference type="NCBIfam" id="NF011226">
    <property type="entry name" value="PRK14633.1"/>
    <property type="match status" value="1"/>
</dbReference>
<dbReference type="PANTHER" id="PTHR33867">
    <property type="entry name" value="RIBOSOME MATURATION FACTOR RIMP"/>
    <property type="match status" value="1"/>
</dbReference>
<dbReference type="PANTHER" id="PTHR33867:SF1">
    <property type="entry name" value="RIBOSOME MATURATION FACTOR RIMP"/>
    <property type="match status" value="1"/>
</dbReference>
<dbReference type="Pfam" id="PF17384">
    <property type="entry name" value="DUF150_C"/>
    <property type="match status" value="1"/>
</dbReference>
<dbReference type="Pfam" id="PF02576">
    <property type="entry name" value="RimP_N"/>
    <property type="match status" value="1"/>
</dbReference>
<dbReference type="SUPFAM" id="SSF74942">
    <property type="entry name" value="YhbC-like, C-terminal domain"/>
    <property type="match status" value="1"/>
</dbReference>
<dbReference type="SUPFAM" id="SSF75420">
    <property type="entry name" value="YhbC-like, N-terminal domain"/>
    <property type="match status" value="1"/>
</dbReference>
<proteinExistence type="inferred from homology"/>
<organism>
    <name type="scientific">Francisella tularensis subsp. novicida (strain U112)</name>
    <dbReference type="NCBI Taxonomy" id="401614"/>
    <lineage>
        <taxon>Bacteria</taxon>
        <taxon>Pseudomonadati</taxon>
        <taxon>Pseudomonadota</taxon>
        <taxon>Gammaproteobacteria</taxon>
        <taxon>Thiotrichales</taxon>
        <taxon>Francisellaceae</taxon>
        <taxon>Francisella</taxon>
    </lineage>
</organism>
<keyword id="KW-0963">Cytoplasm</keyword>
<keyword id="KW-0690">Ribosome biogenesis</keyword>
<gene>
    <name evidence="1" type="primary">rimP</name>
    <name type="ordered locus">FTN_1662</name>
</gene>
<feature type="chain" id="PRO_1000136765" description="Ribosome maturation factor RimP">
    <location>
        <begin position="1"/>
        <end position="150"/>
    </location>
</feature>
<name>RIMP_FRATN</name>
<evidence type="ECO:0000255" key="1">
    <source>
        <dbReference type="HAMAP-Rule" id="MF_01077"/>
    </source>
</evidence>